<protein>
    <recommendedName>
        <fullName evidence="1">Global transcriptional regulator CodY</fullName>
    </recommendedName>
</protein>
<dbReference type="EMBL" id="CP000725">
    <property type="protein sequence ID" value="ABV09190.1"/>
    <property type="molecule type" value="Genomic_DNA"/>
</dbReference>
<dbReference type="RefSeq" id="WP_008808441.1">
    <property type="nucleotide sequence ID" value="NC_009785.1"/>
</dbReference>
<dbReference type="SMR" id="A8AVD7"/>
<dbReference type="STRING" id="467705.SGO_0431"/>
<dbReference type="KEGG" id="sgo:SGO_0431"/>
<dbReference type="eggNOG" id="COG4465">
    <property type="taxonomic scope" value="Bacteria"/>
</dbReference>
<dbReference type="HOGENOM" id="CLU_089581_0_0_9"/>
<dbReference type="Proteomes" id="UP000001131">
    <property type="component" value="Chromosome"/>
</dbReference>
<dbReference type="GO" id="GO:0005737">
    <property type="term" value="C:cytoplasm"/>
    <property type="evidence" value="ECO:0007669"/>
    <property type="project" value="UniProtKB-SubCell"/>
</dbReference>
<dbReference type="GO" id="GO:0003677">
    <property type="term" value="F:DNA binding"/>
    <property type="evidence" value="ECO:0007669"/>
    <property type="project" value="UniProtKB-UniRule"/>
</dbReference>
<dbReference type="GO" id="GO:0003700">
    <property type="term" value="F:DNA-binding transcription factor activity"/>
    <property type="evidence" value="ECO:0007669"/>
    <property type="project" value="InterPro"/>
</dbReference>
<dbReference type="GO" id="GO:0005525">
    <property type="term" value="F:GTP binding"/>
    <property type="evidence" value="ECO:0007669"/>
    <property type="project" value="InterPro"/>
</dbReference>
<dbReference type="GO" id="GO:0045892">
    <property type="term" value="P:negative regulation of DNA-templated transcription"/>
    <property type="evidence" value="ECO:0007669"/>
    <property type="project" value="UniProtKB-UniRule"/>
</dbReference>
<dbReference type="CDD" id="cd00090">
    <property type="entry name" value="HTH_ARSR"/>
    <property type="match status" value="1"/>
</dbReference>
<dbReference type="FunFam" id="1.10.10.10:FF:000034">
    <property type="entry name" value="GTP-sensing transcriptional pleiotropic repressor CodY"/>
    <property type="match status" value="1"/>
</dbReference>
<dbReference type="FunFam" id="3.30.450.40:FF:000003">
    <property type="entry name" value="GTP-sensing transcriptional pleiotropic repressor CodY"/>
    <property type="match status" value="1"/>
</dbReference>
<dbReference type="Gene3D" id="3.30.450.40">
    <property type="match status" value="1"/>
</dbReference>
<dbReference type="Gene3D" id="1.10.10.10">
    <property type="entry name" value="Winged helix-like DNA-binding domain superfamily/Winged helix DNA-binding domain"/>
    <property type="match status" value="1"/>
</dbReference>
<dbReference type="HAMAP" id="MF_00621">
    <property type="entry name" value="HTH_type_CodY"/>
    <property type="match status" value="1"/>
</dbReference>
<dbReference type="InterPro" id="IPR011991">
    <property type="entry name" value="ArsR-like_HTH"/>
</dbReference>
<dbReference type="InterPro" id="IPR014154">
    <property type="entry name" value="CodY"/>
</dbReference>
<dbReference type="InterPro" id="IPR029016">
    <property type="entry name" value="GAF-like_dom_sf"/>
</dbReference>
<dbReference type="InterPro" id="IPR013198">
    <property type="entry name" value="GTP_trans_reg_CodY_C"/>
</dbReference>
<dbReference type="InterPro" id="IPR010312">
    <property type="entry name" value="Transc_reg_CodY_N"/>
</dbReference>
<dbReference type="InterPro" id="IPR036388">
    <property type="entry name" value="WH-like_DNA-bd_sf"/>
</dbReference>
<dbReference type="InterPro" id="IPR036390">
    <property type="entry name" value="WH_DNA-bd_sf"/>
</dbReference>
<dbReference type="NCBIfam" id="TIGR02787">
    <property type="entry name" value="codY_Gpos"/>
    <property type="match status" value="1"/>
</dbReference>
<dbReference type="NCBIfam" id="NF003170">
    <property type="entry name" value="PRK04158.1"/>
    <property type="match status" value="1"/>
</dbReference>
<dbReference type="PANTHER" id="PTHR40062:SF1">
    <property type="entry name" value="GLOBAL TRANSCRIPTIONAL REGULATOR CODY"/>
    <property type="match status" value="1"/>
</dbReference>
<dbReference type="PANTHER" id="PTHR40062">
    <property type="entry name" value="GTP-SENSING TRANSCRIPTIONAL PLEIOTROPIC REPRESSOR CODY"/>
    <property type="match status" value="1"/>
</dbReference>
<dbReference type="Pfam" id="PF06018">
    <property type="entry name" value="CodY"/>
    <property type="match status" value="1"/>
</dbReference>
<dbReference type="Pfam" id="PF08222">
    <property type="entry name" value="HTH_CodY"/>
    <property type="match status" value="1"/>
</dbReference>
<dbReference type="PIRSF" id="PIRSF011572">
    <property type="entry name" value="GTP_sensing_CodY"/>
    <property type="match status" value="1"/>
</dbReference>
<dbReference type="SUPFAM" id="SSF46785">
    <property type="entry name" value="Winged helix' DNA-binding domain"/>
    <property type="match status" value="1"/>
</dbReference>
<accession>A8AVD7</accession>
<gene>
    <name evidence="1" type="primary">codY</name>
    <name type="ordered locus">SGO_0431</name>
</gene>
<evidence type="ECO:0000255" key="1">
    <source>
        <dbReference type="HAMAP-Rule" id="MF_00621"/>
    </source>
</evidence>
<keyword id="KW-0963">Cytoplasm</keyword>
<keyword id="KW-0238">DNA-binding</keyword>
<keyword id="KW-1185">Reference proteome</keyword>
<keyword id="KW-0678">Repressor</keyword>
<keyword id="KW-0804">Transcription</keyword>
<keyword id="KW-0805">Transcription regulation</keyword>
<comment type="function">
    <text evidence="1">DNA-binding global transcriptional regulator which is involved in the adaptive response to starvation and acts by directly or indirectly controlling the expression of numerous genes in response to nutrient availability. During rapid exponential growth, CodY is highly active and represses genes whose products allow adaptation to nutrient depletion.</text>
</comment>
<comment type="subcellular location">
    <subcellularLocation>
        <location evidence="1">Cytoplasm</location>
    </subcellularLocation>
</comment>
<comment type="similarity">
    <text evidence="1">Belongs to the CodY family.</text>
</comment>
<sequence>MAHLLEKTRKITSILKRSEEQLQEELPYNDITRQLAEIMDCNACIVNSKGRLLGYFMRYKTNNDRVEAFYQTKMFPDDYIRSANLIYDTEANLPVEHELSIFPVETQSDFPDGLTTIAPIHVSGIRLGSLIIWRNDEKFDNDDLVLVEISSTVVGIQLLNFQREEDEKNIRRRTAVTMAVNTLSYSELRAVSAILGELNGNEGHLTASVIADRIGITRSVIVNALRKLESAGIIESRSLGMKGTYLKVLIPDVFEEIKKRDY</sequence>
<feature type="chain" id="PRO_1000082591" description="Global transcriptional regulator CodY">
    <location>
        <begin position="1"/>
        <end position="262"/>
    </location>
</feature>
<feature type="DNA-binding region" description="H-T-H motif" evidence="1">
    <location>
        <begin position="207"/>
        <end position="226"/>
    </location>
</feature>
<feature type="region of interest" description="GAF domain" evidence="1">
    <location>
        <begin position="1"/>
        <end position="159"/>
    </location>
</feature>
<proteinExistence type="inferred from homology"/>
<name>CODY_STRGC</name>
<organism>
    <name type="scientific">Streptococcus gordonii (strain Challis / ATCC 35105 / BCRC 15272 / CH1 / DL1 / V288)</name>
    <dbReference type="NCBI Taxonomy" id="467705"/>
    <lineage>
        <taxon>Bacteria</taxon>
        <taxon>Bacillati</taxon>
        <taxon>Bacillota</taxon>
        <taxon>Bacilli</taxon>
        <taxon>Lactobacillales</taxon>
        <taxon>Streptococcaceae</taxon>
        <taxon>Streptococcus</taxon>
    </lineage>
</organism>
<reference key="1">
    <citation type="journal article" date="2007" name="J. Bacteriol.">
        <title>Genome-wide transcriptional changes in Streptococcus gordonii in response to competence signaling peptide.</title>
        <authorList>
            <person name="Vickerman M.M."/>
            <person name="Iobst S."/>
            <person name="Jesionowski A.M."/>
            <person name="Gill S.R."/>
        </authorList>
    </citation>
    <scope>NUCLEOTIDE SEQUENCE [LARGE SCALE GENOMIC DNA]</scope>
    <source>
        <strain>Challis / ATCC 35105 / BCRC 15272 / CH1 / DL1 / V288</strain>
    </source>
</reference>